<reference key="1">
    <citation type="journal article" date="2003" name="Mol. Cell. Proteomics">
        <title>ERp19 and ERp46, new members of the thioredoxin family of endoplasmic reticulum proteins.</title>
        <authorList>
            <person name="Knoblach B."/>
            <person name="Keller B.O."/>
            <person name="Groenendyk J."/>
            <person name="Aldred S."/>
            <person name="Zheng J."/>
            <person name="Lemire B.D."/>
            <person name="Li L."/>
            <person name="Michalak M."/>
        </authorList>
    </citation>
    <scope>NUCLEOTIDE SEQUENCE [MRNA]</scope>
    <scope>SUBCELLULAR LOCATION</scope>
    <source>
        <tissue>Embryo</tissue>
    </source>
</reference>
<reference key="2">
    <citation type="journal article" date="2005" name="Science">
        <title>The transcriptional landscape of the mammalian genome.</title>
        <authorList>
            <person name="Carninci P."/>
            <person name="Kasukawa T."/>
            <person name="Katayama S."/>
            <person name="Gough J."/>
            <person name="Frith M.C."/>
            <person name="Maeda N."/>
            <person name="Oyama R."/>
            <person name="Ravasi T."/>
            <person name="Lenhard B."/>
            <person name="Wells C."/>
            <person name="Kodzius R."/>
            <person name="Shimokawa K."/>
            <person name="Bajic V.B."/>
            <person name="Brenner S.E."/>
            <person name="Batalov S."/>
            <person name="Forrest A.R."/>
            <person name="Zavolan M."/>
            <person name="Davis M.J."/>
            <person name="Wilming L.G."/>
            <person name="Aidinis V."/>
            <person name="Allen J.E."/>
            <person name="Ambesi-Impiombato A."/>
            <person name="Apweiler R."/>
            <person name="Aturaliya R.N."/>
            <person name="Bailey T.L."/>
            <person name="Bansal M."/>
            <person name="Baxter L."/>
            <person name="Beisel K.W."/>
            <person name="Bersano T."/>
            <person name="Bono H."/>
            <person name="Chalk A.M."/>
            <person name="Chiu K.P."/>
            <person name="Choudhary V."/>
            <person name="Christoffels A."/>
            <person name="Clutterbuck D.R."/>
            <person name="Crowe M.L."/>
            <person name="Dalla E."/>
            <person name="Dalrymple B.P."/>
            <person name="de Bono B."/>
            <person name="Della Gatta G."/>
            <person name="di Bernardo D."/>
            <person name="Down T."/>
            <person name="Engstrom P."/>
            <person name="Fagiolini M."/>
            <person name="Faulkner G."/>
            <person name="Fletcher C.F."/>
            <person name="Fukushima T."/>
            <person name="Furuno M."/>
            <person name="Futaki S."/>
            <person name="Gariboldi M."/>
            <person name="Georgii-Hemming P."/>
            <person name="Gingeras T.R."/>
            <person name="Gojobori T."/>
            <person name="Green R.E."/>
            <person name="Gustincich S."/>
            <person name="Harbers M."/>
            <person name="Hayashi Y."/>
            <person name="Hensch T.K."/>
            <person name="Hirokawa N."/>
            <person name="Hill D."/>
            <person name="Huminiecki L."/>
            <person name="Iacono M."/>
            <person name="Ikeo K."/>
            <person name="Iwama A."/>
            <person name="Ishikawa T."/>
            <person name="Jakt M."/>
            <person name="Kanapin A."/>
            <person name="Katoh M."/>
            <person name="Kawasawa Y."/>
            <person name="Kelso J."/>
            <person name="Kitamura H."/>
            <person name="Kitano H."/>
            <person name="Kollias G."/>
            <person name="Krishnan S.P."/>
            <person name="Kruger A."/>
            <person name="Kummerfeld S.K."/>
            <person name="Kurochkin I.V."/>
            <person name="Lareau L.F."/>
            <person name="Lazarevic D."/>
            <person name="Lipovich L."/>
            <person name="Liu J."/>
            <person name="Liuni S."/>
            <person name="McWilliam S."/>
            <person name="Madan Babu M."/>
            <person name="Madera M."/>
            <person name="Marchionni L."/>
            <person name="Matsuda H."/>
            <person name="Matsuzawa S."/>
            <person name="Miki H."/>
            <person name="Mignone F."/>
            <person name="Miyake S."/>
            <person name="Morris K."/>
            <person name="Mottagui-Tabar S."/>
            <person name="Mulder N."/>
            <person name="Nakano N."/>
            <person name="Nakauchi H."/>
            <person name="Ng P."/>
            <person name="Nilsson R."/>
            <person name="Nishiguchi S."/>
            <person name="Nishikawa S."/>
            <person name="Nori F."/>
            <person name="Ohara O."/>
            <person name="Okazaki Y."/>
            <person name="Orlando V."/>
            <person name="Pang K.C."/>
            <person name="Pavan W.J."/>
            <person name="Pavesi G."/>
            <person name="Pesole G."/>
            <person name="Petrovsky N."/>
            <person name="Piazza S."/>
            <person name="Reed J."/>
            <person name="Reid J.F."/>
            <person name="Ring B.Z."/>
            <person name="Ringwald M."/>
            <person name="Rost B."/>
            <person name="Ruan Y."/>
            <person name="Salzberg S.L."/>
            <person name="Sandelin A."/>
            <person name="Schneider C."/>
            <person name="Schoenbach C."/>
            <person name="Sekiguchi K."/>
            <person name="Semple C.A."/>
            <person name="Seno S."/>
            <person name="Sessa L."/>
            <person name="Sheng Y."/>
            <person name="Shibata Y."/>
            <person name="Shimada H."/>
            <person name="Shimada K."/>
            <person name="Silva D."/>
            <person name="Sinclair B."/>
            <person name="Sperling S."/>
            <person name="Stupka E."/>
            <person name="Sugiura K."/>
            <person name="Sultana R."/>
            <person name="Takenaka Y."/>
            <person name="Taki K."/>
            <person name="Tammoja K."/>
            <person name="Tan S.L."/>
            <person name="Tang S."/>
            <person name="Taylor M.S."/>
            <person name="Tegner J."/>
            <person name="Teichmann S.A."/>
            <person name="Ueda H.R."/>
            <person name="van Nimwegen E."/>
            <person name="Verardo R."/>
            <person name="Wei C.L."/>
            <person name="Yagi K."/>
            <person name="Yamanishi H."/>
            <person name="Zabarovsky E."/>
            <person name="Zhu S."/>
            <person name="Zimmer A."/>
            <person name="Hide W."/>
            <person name="Bult C."/>
            <person name="Grimmond S.M."/>
            <person name="Teasdale R.D."/>
            <person name="Liu E.T."/>
            <person name="Brusic V."/>
            <person name="Quackenbush J."/>
            <person name="Wahlestedt C."/>
            <person name="Mattick J.S."/>
            <person name="Hume D.A."/>
            <person name="Kai C."/>
            <person name="Sasaki D."/>
            <person name="Tomaru Y."/>
            <person name="Fukuda S."/>
            <person name="Kanamori-Katayama M."/>
            <person name="Suzuki M."/>
            <person name="Aoki J."/>
            <person name="Arakawa T."/>
            <person name="Iida J."/>
            <person name="Imamura K."/>
            <person name="Itoh M."/>
            <person name="Kato T."/>
            <person name="Kawaji H."/>
            <person name="Kawagashira N."/>
            <person name="Kawashima T."/>
            <person name="Kojima M."/>
            <person name="Kondo S."/>
            <person name="Konno H."/>
            <person name="Nakano K."/>
            <person name="Ninomiya N."/>
            <person name="Nishio T."/>
            <person name="Okada M."/>
            <person name="Plessy C."/>
            <person name="Shibata K."/>
            <person name="Shiraki T."/>
            <person name="Suzuki S."/>
            <person name="Tagami M."/>
            <person name="Waki K."/>
            <person name="Watahiki A."/>
            <person name="Okamura-Oho Y."/>
            <person name="Suzuki H."/>
            <person name="Kawai J."/>
            <person name="Hayashizaki Y."/>
        </authorList>
    </citation>
    <scope>NUCLEOTIDE SEQUENCE [LARGE SCALE MRNA]</scope>
    <source>
        <strain>C57BL/6J</strain>
        <tissue>Embryo</tissue>
        <tissue>Kidney</tissue>
    </source>
</reference>
<reference key="3">
    <citation type="journal article" date="2004" name="Genome Res.">
        <title>The status, quality, and expansion of the NIH full-length cDNA project: the Mammalian Gene Collection (MGC).</title>
        <authorList>
            <consortium name="The MGC Project Team"/>
        </authorList>
    </citation>
    <scope>NUCLEOTIDE SEQUENCE [LARGE SCALE MRNA]</scope>
    <source>
        <tissue>Mammary gland</tissue>
    </source>
</reference>
<reference key="4">
    <citation type="journal article" date="2010" name="Cell">
        <title>A tissue-specific atlas of mouse protein phosphorylation and expression.</title>
        <authorList>
            <person name="Huttlin E.L."/>
            <person name="Jedrychowski M.P."/>
            <person name="Elias J.E."/>
            <person name="Goswami T."/>
            <person name="Rad R."/>
            <person name="Beausoleil S.A."/>
            <person name="Villen J."/>
            <person name="Haas W."/>
            <person name="Sowa M.E."/>
            <person name="Gygi S.P."/>
        </authorList>
    </citation>
    <scope>IDENTIFICATION BY MASS SPECTROMETRY [LARGE SCALE ANALYSIS]</scope>
    <source>
        <tissue>Brain</tissue>
        <tissue>Brown adipose tissue</tissue>
        <tissue>Heart</tissue>
        <tissue>Kidney</tissue>
        <tissue>Liver</tissue>
        <tissue>Lung</tissue>
        <tissue>Pancreas</tissue>
        <tissue>Spleen</tissue>
        <tissue>Testis</tissue>
    </source>
</reference>
<feature type="signal peptide" evidence="1">
    <location>
        <begin position="1"/>
        <end position="24"/>
    </location>
</feature>
<feature type="chain" id="PRO_0000034190" description="Thioredoxin domain-containing protein 12">
    <location>
        <begin position="25"/>
        <end position="170"/>
    </location>
</feature>
<feature type="short sequence motif" description="Prevents secretion from ER" evidence="4">
    <location>
        <begin position="167"/>
        <end position="170"/>
    </location>
</feature>
<feature type="glycosylation site" description="N-linked (GlcNAc...) asparagine" evidence="2">
    <location>
        <position position="128"/>
    </location>
</feature>
<feature type="disulfide bond" description="Redox-active" evidence="3">
    <location>
        <begin position="64"/>
        <end position="67"/>
    </location>
</feature>
<accession>Q9CQU0</accession>
<accession>Q53YN1</accession>
<comment type="function">
    <text evidence="1">Protein-disulfide reductase of the endoplasmic reticulum that promotes disulfide bond formation in client proteins through its thiol-disulfide oxidase activity.</text>
</comment>
<comment type="catalytic activity">
    <reaction evidence="1">
        <text>[protein]-disulfide + 2 glutathione = [protein]-dithiol + glutathione disulfide</text>
        <dbReference type="Rhea" id="RHEA:21064"/>
        <dbReference type="Rhea" id="RHEA-COMP:10593"/>
        <dbReference type="Rhea" id="RHEA-COMP:10594"/>
        <dbReference type="ChEBI" id="CHEBI:29950"/>
        <dbReference type="ChEBI" id="CHEBI:50058"/>
        <dbReference type="ChEBI" id="CHEBI:57925"/>
        <dbReference type="ChEBI" id="CHEBI:58297"/>
        <dbReference type="EC" id="1.8.4.2"/>
    </reaction>
    <physiologicalReaction direction="right-to-left" evidence="1">
        <dbReference type="Rhea" id="RHEA:21066"/>
    </physiologicalReaction>
</comment>
<comment type="subcellular location">
    <subcellularLocation>
        <location evidence="4 5">Endoplasmic reticulum lumen</location>
    </subcellularLocation>
</comment>
<keyword id="KW-1015">Disulfide bond</keyword>
<keyword id="KW-0256">Endoplasmic reticulum</keyword>
<keyword id="KW-0325">Glycoprotein</keyword>
<keyword id="KW-0560">Oxidoreductase</keyword>
<keyword id="KW-0676">Redox-active center</keyword>
<keyword id="KW-1185">Reference proteome</keyword>
<keyword id="KW-0732">Signal</keyword>
<organism>
    <name type="scientific">Mus musculus</name>
    <name type="common">Mouse</name>
    <dbReference type="NCBI Taxonomy" id="10090"/>
    <lineage>
        <taxon>Eukaryota</taxon>
        <taxon>Metazoa</taxon>
        <taxon>Chordata</taxon>
        <taxon>Craniata</taxon>
        <taxon>Vertebrata</taxon>
        <taxon>Euteleostomi</taxon>
        <taxon>Mammalia</taxon>
        <taxon>Eutheria</taxon>
        <taxon>Euarchontoglires</taxon>
        <taxon>Glires</taxon>
        <taxon>Rodentia</taxon>
        <taxon>Myomorpha</taxon>
        <taxon>Muroidea</taxon>
        <taxon>Muridae</taxon>
        <taxon>Murinae</taxon>
        <taxon>Mus</taxon>
        <taxon>Mus</taxon>
    </lineage>
</organism>
<proteinExistence type="evidence at protein level"/>
<name>TXD12_MOUSE</name>
<protein>
    <recommendedName>
        <fullName evidence="1">Thioredoxin domain-containing protein 12</fullName>
        <ecNumber evidence="1">1.8.4.2</ecNumber>
    </recommendedName>
    <alternativeName>
        <fullName>Endoplasmic reticulum resident protein 19</fullName>
        <shortName evidence="6">ER protein 19</shortName>
        <shortName evidence="6">ERp19</shortName>
    </alternativeName>
    <alternativeName>
        <fullName>Thioredoxin-like protein p19</fullName>
    </alternativeName>
</protein>
<evidence type="ECO:0000250" key="1">
    <source>
        <dbReference type="UniProtKB" id="O95881"/>
    </source>
</evidence>
<evidence type="ECO:0000255" key="2"/>
<evidence type="ECO:0000255" key="3">
    <source>
        <dbReference type="PROSITE-ProRule" id="PRU00691"/>
    </source>
</evidence>
<evidence type="ECO:0000255" key="4">
    <source>
        <dbReference type="PROSITE-ProRule" id="PRU10138"/>
    </source>
</evidence>
<evidence type="ECO:0000269" key="5">
    <source>
    </source>
</evidence>
<evidence type="ECO:0000303" key="6">
    <source>
    </source>
</evidence>
<evidence type="ECO:0000312" key="7">
    <source>
        <dbReference type="MGI" id="MGI:1913323"/>
    </source>
</evidence>
<dbReference type="EC" id="1.8.4.2" evidence="1"/>
<dbReference type="EMBL" id="AY548113">
    <property type="protein sequence ID" value="AAS55653.1"/>
    <property type="molecule type" value="mRNA"/>
</dbReference>
<dbReference type="EMBL" id="AK003481">
    <property type="protein sequence ID" value="BAB22811.1"/>
    <property type="molecule type" value="mRNA"/>
</dbReference>
<dbReference type="EMBL" id="AK002862">
    <property type="protein sequence ID" value="BAB22413.1"/>
    <property type="molecule type" value="mRNA"/>
</dbReference>
<dbReference type="EMBL" id="BC006857">
    <property type="protein sequence ID" value="AAH06857.1"/>
    <property type="molecule type" value="mRNA"/>
</dbReference>
<dbReference type="CCDS" id="CCDS18457.1"/>
<dbReference type="RefSeq" id="NP_079610.1">
    <property type="nucleotide sequence ID" value="NM_025334.3"/>
</dbReference>
<dbReference type="SMR" id="Q9CQU0"/>
<dbReference type="BioGRID" id="211195">
    <property type="interactions" value="10"/>
</dbReference>
<dbReference type="FunCoup" id="Q9CQU0">
    <property type="interactions" value="2166"/>
</dbReference>
<dbReference type="IntAct" id="Q9CQU0">
    <property type="interactions" value="2"/>
</dbReference>
<dbReference type="STRING" id="10090.ENSMUSP00000030296"/>
<dbReference type="GlyConnect" id="2763">
    <property type="glycosylation" value="1 N-Linked glycan (1 site)"/>
</dbReference>
<dbReference type="GlyCosmos" id="Q9CQU0">
    <property type="glycosylation" value="1 site, 1 glycan"/>
</dbReference>
<dbReference type="GlyGen" id="Q9CQU0">
    <property type="glycosylation" value="2 sites, 2 N-linked glycans (1 site), 1 O-linked glycan (1 site)"/>
</dbReference>
<dbReference type="iPTMnet" id="Q9CQU0"/>
<dbReference type="PhosphoSitePlus" id="Q9CQU0"/>
<dbReference type="SwissPalm" id="Q9CQU0"/>
<dbReference type="REPRODUCTION-2DPAGE" id="Q9CQU0"/>
<dbReference type="jPOST" id="Q9CQU0"/>
<dbReference type="PaxDb" id="10090-ENSMUSP00000030296"/>
<dbReference type="PeptideAtlas" id="Q9CQU0"/>
<dbReference type="ProteomicsDB" id="298038"/>
<dbReference type="Pumba" id="Q9CQU0"/>
<dbReference type="Antibodypedia" id="46886">
    <property type="antibodies" value="146 antibodies from 21 providers"/>
</dbReference>
<dbReference type="DNASU" id="66073"/>
<dbReference type="Ensembl" id="ENSMUST00000030296.9">
    <property type="protein sequence ID" value="ENSMUSP00000030296.9"/>
    <property type="gene ID" value="ENSMUSG00000028567.9"/>
</dbReference>
<dbReference type="GeneID" id="66073"/>
<dbReference type="KEGG" id="mmu:66073"/>
<dbReference type="UCSC" id="uc008ubs.1">
    <property type="organism name" value="mouse"/>
</dbReference>
<dbReference type="AGR" id="MGI:1913323"/>
<dbReference type="CTD" id="51060"/>
<dbReference type="MGI" id="MGI:1913323">
    <property type="gene designation" value="Txndc12"/>
</dbReference>
<dbReference type="VEuPathDB" id="HostDB:ENSMUSG00000028567"/>
<dbReference type="eggNOG" id="ENOG502RXP1">
    <property type="taxonomic scope" value="Eukaryota"/>
</dbReference>
<dbReference type="GeneTree" id="ENSGT00530000063273"/>
<dbReference type="HOGENOM" id="CLU_088048_2_0_1"/>
<dbReference type="InParanoid" id="Q9CQU0"/>
<dbReference type="OMA" id="SEHFVMV"/>
<dbReference type="OrthoDB" id="262308at2759"/>
<dbReference type="PhylomeDB" id="Q9CQU0"/>
<dbReference type="TreeFam" id="TF321449"/>
<dbReference type="BioGRID-ORCS" id="66073">
    <property type="hits" value="2 hits in 79 CRISPR screens"/>
</dbReference>
<dbReference type="ChiTaRS" id="Txndc12">
    <property type="organism name" value="mouse"/>
</dbReference>
<dbReference type="PRO" id="PR:Q9CQU0"/>
<dbReference type="Proteomes" id="UP000000589">
    <property type="component" value="Chromosome 4"/>
</dbReference>
<dbReference type="RNAct" id="Q9CQU0">
    <property type="molecule type" value="protein"/>
</dbReference>
<dbReference type="Bgee" id="ENSMUSG00000028567">
    <property type="expression patterns" value="Expressed in placenta labyrinth and 260 other cell types or tissues"/>
</dbReference>
<dbReference type="GO" id="GO:0005783">
    <property type="term" value="C:endoplasmic reticulum"/>
    <property type="evidence" value="ECO:0000314"/>
    <property type="project" value="MGI"/>
</dbReference>
<dbReference type="GO" id="GO:0005788">
    <property type="term" value="C:endoplasmic reticulum lumen"/>
    <property type="evidence" value="ECO:0000314"/>
    <property type="project" value="UniProtKB"/>
</dbReference>
<dbReference type="GO" id="GO:0019153">
    <property type="term" value="F:protein-disulfide reductase (glutathione) activity"/>
    <property type="evidence" value="ECO:0000250"/>
    <property type="project" value="UniProtKB"/>
</dbReference>
<dbReference type="GO" id="GO:0015035">
    <property type="term" value="F:protein-disulfide reductase activity"/>
    <property type="evidence" value="ECO:0000266"/>
    <property type="project" value="MGI"/>
</dbReference>
<dbReference type="GO" id="GO:1902236">
    <property type="term" value="P:negative regulation of endoplasmic reticulum stress-induced intrinsic apoptotic signaling pathway"/>
    <property type="evidence" value="ECO:0000266"/>
    <property type="project" value="MGI"/>
</dbReference>
<dbReference type="CDD" id="cd02959">
    <property type="entry name" value="ERp19"/>
    <property type="match status" value="1"/>
</dbReference>
<dbReference type="FunFam" id="3.40.30.10:FF:000099">
    <property type="entry name" value="thioredoxin domain-containing protein 12"/>
    <property type="match status" value="1"/>
</dbReference>
<dbReference type="Gene3D" id="3.40.30.10">
    <property type="entry name" value="Glutaredoxin"/>
    <property type="match status" value="1"/>
</dbReference>
<dbReference type="InterPro" id="IPR051099">
    <property type="entry name" value="AGR/TXD"/>
</dbReference>
<dbReference type="InterPro" id="IPR037462">
    <property type="entry name" value="ERp19"/>
</dbReference>
<dbReference type="InterPro" id="IPR036249">
    <property type="entry name" value="Thioredoxin-like_sf"/>
</dbReference>
<dbReference type="InterPro" id="IPR017937">
    <property type="entry name" value="Thioredoxin_CS"/>
</dbReference>
<dbReference type="InterPro" id="IPR013766">
    <property type="entry name" value="Thioredoxin_domain"/>
</dbReference>
<dbReference type="PANTHER" id="PTHR15337">
    <property type="entry name" value="ANTERIOR GRADIENT PROTEIN-RELATED"/>
    <property type="match status" value="1"/>
</dbReference>
<dbReference type="PANTHER" id="PTHR15337:SF10">
    <property type="entry name" value="THIOREDOXIN DOMAIN-CONTAINING PROTEIN 12"/>
    <property type="match status" value="1"/>
</dbReference>
<dbReference type="Pfam" id="PF13899">
    <property type="entry name" value="Thioredoxin_7"/>
    <property type="match status" value="1"/>
</dbReference>
<dbReference type="SUPFAM" id="SSF52833">
    <property type="entry name" value="Thioredoxin-like"/>
    <property type="match status" value="1"/>
</dbReference>
<dbReference type="PROSITE" id="PS00014">
    <property type="entry name" value="ER_TARGET"/>
    <property type="match status" value="1"/>
</dbReference>
<dbReference type="PROSITE" id="PS00194">
    <property type="entry name" value="THIOREDOXIN_1"/>
    <property type="match status" value="1"/>
</dbReference>
<dbReference type="PROSITE" id="PS51352">
    <property type="entry name" value="THIOREDOXIN_2"/>
    <property type="match status" value="1"/>
</dbReference>
<sequence>MSLRFGATCLLSFSFLLLITSSDGRTGLGKGFGDHIHWRTLEDGKKEAAASGLPLMVIIHKSWCGACKALKPKFAESTEISELSHNFVMVNLEDEEEPRDEDFSPDGGYIPRILFLDPSGKVRPEIINESGNPSYKYFYVSAEQVVQGMKEAQERLTGDAFREKHFQDEL</sequence>
<gene>
    <name evidence="7" type="primary">Txndc12</name>
    <name type="synonym">Tlp19</name>
</gene>